<keyword id="KW-0007">Acetylation</keyword>
<keyword id="KW-1017">Isopeptide bond</keyword>
<keyword id="KW-0597">Phosphoprotein</keyword>
<keyword id="KW-1185">Reference proteome</keyword>
<keyword id="KW-0677">Repeat</keyword>
<keyword id="KW-0832">Ubl conjugation</keyword>
<keyword id="KW-0853">WD repeat</keyword>
<dbReference type="EMBL" id="AK159714">
    <property type="protein sequence ID" value="BAE35310.1"/>
    <property type="molecule type" value="mRNA"/>
</dbReference>
<dbReference type="CCDS" id="CCDS37033.1"/>
<dbReference type="RefSeq" id="NP_001074871.1">
    <property type="nucleotide sequence ID" value="NM_001081402.1"/>
</dbReference>
<dbReference type="SMR" id="Q3TWF6"/>
<dbReference type="FunCoup" id="Q3TWF6">
    <property type="interactions" value="4148"/>
</dbReference>
<dbReference type="IntAct" id="Q3TWF6">
    <property type="interactions" value="2"/>
</dbReference>
<dbReference type="MINT" id="Q3TWF6"/>
<dbReference type="STRING" id="10090.ENSMUSP00000037340"/>
<dbReference type="iPTMnet" id="Q3TWF6"/>
<dbReference type="PhosphoSitePlus" id="Q3TWF6"/>
<dbReference type="REPRODUCTION-2DPAGE" id="IPI00464325"/>
<dbReference type="jPOST" id="Q3TWF6"/>
<dbReference type="PaxDb" id="10090-ENSMUSP00000037340"/>
<dbReference type="ProteomicsDB" id="299749"/>
<dbReference type="Pumba" id="Q3TWF6"/>
<dbReference type="GeneID" id="545085"/>
<dbReference type="KEGG" id="mmu:545085"/>
<dbReference type="AGR" id="MGI:1921020"/>
<dbReference type="CTD" id="55100"/>
<dbReference type="MGI" id="MGI:1921020">
    <property type="gene designation" value="Wdr70"/>
</dbReference>
<dbReference type="eggNOG" id="KOG0772">
    <property type="taxonomic scope" value="Eukaryota"/>
</dbReference>
<dbReference type="InParanoid" id="Q3TWF6"/>
<dbReference type="OrthoDB" id="10264376at2759"/>
<dbReference type="PhylomeDB" id="Q3TWF6"/>
<dbReference type="Reactome" id="R-MMU-72163">
    <property type="pathway name" value="mRNA Splicing - Major Pathway"/>
</dbReference>
<dbReference type="ChiTaRS" id="Wdr70">
    <property type="organism name" value="mouse"/>
</dbReference>
<dbReference type="PRO" id="PR:Q3TWF6"/>
<dbReference type="Proteomes" id="UP000000589">
    <property type="component" value="Unplaced"/>
</dbReference>
<dbReference type="RNAct" id="Q3TWF6">
    <property type="molecule type" value="protein"/>
</dbReference>
<dbReference type="FunFam" id="2.130.10.10:FF:000501">
    <property type="entry name" value="WD repeat domain 70"/>
    <property type="match status" value="1"/>
</dbReference>
<dbReference type="FunFam" id="2.130.10.10:FF:000294">
    <property type="entry name" value="WD repeat-containing protein 70"/>
    <property type="match status" value="1"/>
</dbReference>
<dbReference type="Gene3D" id="2.130.10.10">
    <property type="entry name" value="YVTN repeat-like/Quinoprotein amine dehydrogenase"/>
    <property type="match status" value="2"/>
</dbReference>
<dbReference type="InterPro" id="IPR020472">
    <property type="entry name" value="G-protein_beta_WD-40_rep"/>
</dbReference>
<dbReference type="InterPro" id="IPR015943">
    <property type="entry name" value="WD40/YVTN_repeat-like_dom_sf"/>
</dbReference>
<dbReference type="InterPro" id="IPR036322">
    <property type="entry name" value="WD40_repeat_dom_sf"/>
</dbReference>
<dbReference type="InterPro" id="IPR001680">
    <property type="entry name" value="WD40_rpt"/>
</dbReference>
<dbReference type="InterPro" id="IPR051858">
    <property type="entry name" value="WD_repeat_GAD-1"/>
</dbReference>
<dbReference type="PANTHER" id="PTHR16017">
    <property type="entry name" value="GASTRULATION DEFECTIVE PROTEIN 1-RELATED"/>
    <property type="match status" value="1"/>
</dbReference>
<dbReference type="PANTHER" id="PTHR16017:SF0">
    <property type="entry name" value="WD REPEAT-CONTAINING PROTEIN 70"/>
    <property type="match status" value="1"/>
</dbReference>
<dbReference type="Pfam" id="PF00400">
    <property type="entry name" value="WD40"/>
    <property type="match status" value="3"/>
</dbReference>
<dbReference type="PRINTS" id="PR00320">
    <property type="entry name" value="GPROTEINBRPT"/>
</dbReference>
<dbReference type="SMART" id="SM00320">
    <property type="entry name" value="WD40"/>
    <property type="match status" value="6"/>
</dbReference>
<dbReference type="SUPFAM" id="SSF50978">
    <property type="entry name" value="WD40 repeat-like"/>
    <property type="match status" value="1"/>
</dbReference>
<dbReference type="PROSITE" id="PS00678">
    <property type="entry name" value="WD_REPEATS_1"/>
    <property type="match status" value="1"/>
</dbReference>
<dbReference type="PROSITE" id="PS50082">
    <property type="entry name" value="WD_REPEATS_2"/>
    <property type="match status" value="3"/>
</dbReference>
<dbReference type="PROSITE" id="PS50294">
    <property type="entry name" value="WD_REPEATS_REGION"/>
    <property type="match status" value="1"/>
</dbReference>
<organism>
    <name type="scientific">Mus musculus</name>
    <name type="common">Mouse</name>
    <dbReference type="NCBI Taxonomy" id="10090"/>
    <lineage>
        <taxon>Eukaryota</taxon>
        <taxon>Metazoa</taxon>
        <taxon>Chordata</taxon>
        <taxon>Craniata</taxon>
        <taxon>Vertebrata</taxon>
        <taxon>Euteleostomi</taxon>
        <taxon>Mammalia</taxon>
        <taxon>Eutheria</taxon>
        <taxon>Euarchontoglires</taxon>
        <taxon>Glires</taxon>
        <taxon>Rodentia</taxon>
        <taxon>Myomorpha</taxon>
        <taxon>Muroidea</taxon>
        <taxon>Muridae</taxon>
        <taxon>Murinae</taxon>
        <taxon>Mus</taxon>
        <taxon>Mus</taxon>
    </lineage>
</organism>
<feature type="chain" id="PRO_0000305145" description="WD repeat-containing protein 70">
    <location>
        <begin position="1"/>
        <end position="657"/>
    </location>
</feature>
<feature type="repeat" description="WD 1">
    <location>
        <begin position="183"/>
        <end position="222"/>
    </location>
</feature>
<feature type="repeat" description="WD 2">
    <location>
        <begin position="230"/>
        <end position="271"/>
    </location>
</feature>
<feature type="repeat" description="WD 3">
    <location>
        <begin position="284"/>
        <end position="324"/>
    </location>
</feature>
<feature type="repeat" description="WD 4">
    <location>
        <begin position="333"/>
        <end position="372"/>
    </location>
</feature>
<feature type="repeat" description="WD 5">
    <location>
        <begin position="379"/>
        <end position="418"/>
    </location>
</feature>
<feature type="repeat" description="WD 6">
    <location>
        <begin position="424"/>
        <end position="469"/>
    </location>
</feature>
<feature type="repeat" description="WD 7">
    <location>
        <begin position="472"/>
        <end position="511"/>
    </location>
</feature>
<feature type="region of interest" description="Disordered" evidence="2">
    <location>
        <begin position="1"/>
        <end position="21"/>
    </location>
</feature>
<feature type="region of interest" description="Disordered" evidence="2">
    <location>
        <begin position="43"/>
        <end position="172"/>
    </location>
</feature>
<feature type="region of interest" description="Disordered" evidence="2">
    <location>
        <begin position="543"/>
        <end position="584"/>
    </location>
</feature>
<feature type="region of interest" description="Disordered" evidence="2">
    <location>
        <begin position="634"/>
        <end position="657"/>
    </location>
</feature>
<feature type="compositionally biased region" description="Basic and acidic residues" evidence="2">
    <location>
        <begin position="45"/>
        <end position="78"/>
    </location>
</feature>
<feature type="compositionally biased region" description="Low complexity" evidence="2">
    <location>
        <begin position="82"/>
        <end position="105"/>
    </location>
</feature>
<feature type="compositionally biased region" description="Acidic residues" evidence="2">
    <location>
        <begin position="106"/>
        <end position="119"/>
    </location>
</feature>
<feature type="compositionally biased region" description="Acidic residues" evidence="2">
    <location>
        <begin position="150"/>
        <end position="168"/>
    </location>
</feature>
<feature type="compositionally biased region" description="Basic and acidic residues" evidence="2">
    <location>
        <begin position="543"/>
        <end position="568"/>
    </location>
</feature>
<feature type="compositionally biased region" description="Gly residues" evidence="2">
    <location>
        <begin position="574"/>
        <end position="584"/>
    </location>
</feature>
<feature type="compositionally biased region" description="Basic and acidic residues" evidence="2">
    <location>
        <begin position="647"/>
        <end position="657"/>
    </location>
</feature>
<feature type="modified residue" description="N6-acetyllysine" evidence="1">
    <location>
        <position position="455"/>
    </location>
</feature>
<feature type="modified residue" description="Phosphothreonine" evidence="1">
    <location>
        <position position="582"/>
    </location>
</feature>
<feature type="modified residue" description="Phosphoserine" evidence="1">
    <location>
        <position position="624"/>
    </location>
</feature>
<feature type="modified residue" description="Phosphoserine" evidence="4 5">
    <location>
        <position position="641"/>
    </location>
</feature>
<feature type="cross-link" description="Glycyl lysine isopeptide (Lys-Gly) (interchain with G-Cter in SUMO2)" evidence="1">
    <location>
        <position position="299"/>
    </location>
</feature>
<feature type="cross-link" description="Glycyl lysine isopeptide (Lys-Gly) (interchain with G-Cter in SUMO2)" evidence="1">
    <location>
        <position position="593"/>
    </location>
</feature>
<feature type="cross-link" description="Glycyl lysine isopeptide (Lys-Gly) (interchain with G-Cter in SUMO2)" evidence="1">
    <location>
        <position position="599"/>
    </location>
</feature>
<reference key="1">
    <citation type="journal article" date="2005" name="Science">
        <title>The transcriptional landscape of the mammalian genome.</title>
        <authorList>
            <person name="Carninci P."/>
            <person name="Kasukawa T."/>
            <person name="Katayama S."/>
            <person name="Gough J."/>
            <person name="Frith M.C."/>
            <person name="Maeda N."/>
            <person name="Oyama R."/>
            <person name="Ravasi T."/>
            <person name="Lenhard B."/>
            <person name="Wells C."/>
            <person name="Kodzius R."/>
            <person name="Shimokawa K."/>
            <person name="Bajic V.B."/>
            <person name="Brenner S.E."/>
            <person name="Batalov S."/>
            <person name="Forrest A.R."/>
            <person name="Zavolan M."/>
            <person name="Davis M.J."/>
            <person name="Wilming L.G."/>
            <person name="Aidinis V."/>
            <person name="Allen J.E."/>
            <person name="Ambesi-Impiombato A."/>
            <person name="Apweiler R."/>
            <person name="Aturaliya R.N."/>
            <person name="Bailey T.L."/>
            <person name="Bansal M."/>
            <person name="Baxter L."/>
            <person name="Beisel K.W."/>
            <person name="Bersano T."/>
            <person name="Bono H."/>
            <person name="Chalk A.M."/>
            <person name="Chiu K.P."/>
            <person name="Choudhary V."/>
            <person name="Christoffels A."/>
            <person name="Clutterbuck D.R."/>
            <person name="Crowe M.L."/>
            <person name="Dalla E."/>
            <person name="Dalrymple B.P."/>
            <person name="de Bono B."/>
            <person name="Della Gatta G."/>
            <person name="di Bernardo D."/>
            <person name="Down T."/>
            <person name="Engstrom P."/>
            <person name="Fagiolini M."/>
            <person name="Faulkner G."/>
            <person name="Fletcher C.F."/>
            <person name="Fukushima T."/>
            <person name="Furuno M."/>
            <person name="Futaki S."/>
            <person name="Gariboldi M."/>
            <person name="Georgii-Hemming P."/>
            <person name="Gingeras T.R."/>
            <person name="Gojobori T."/>
            <person name="Green R.E."/>
            <person name="Gustincich S."/>
            <person name="Harbers M."/>
            <person name="Hayashi Y."/>
            <person name="Hensch T.K."/>
            <person name="Hirokawa N."/>
            <person name="Hill D."/>
            <person name="Huminiecki L."/>
            <person name="Iacono M."/>
            <person name="Ikeo K."/>
            <person name="Iwama A."/>
            <person name="Ishikawa T."/>
            <person name="Jakt M."/>
            <person name="Kanapin A."/>
            <person name="Katoh M."/>
            <person name="Kawasawa Y."/>
            <person name="Kelso J."/>
            <person name="Kitamura H."/>
            <person name="Kitano H."/>
            <person name="Kollias G."/>
            <person name="Krishnan S.P."/>
            <person name="Kruger A."/>
            <person name="Kummerfeld S.K."/>
            <person name="Kurochkin I.V."/>
            <person name="Lareau L.F."/>
            <person name="Lazarevic D."/>
            <person name="Lipovich L."/>
            <person name="Liu J."/>
            <person name="Liuni S."/>
            <person name="McWilliam S."/>
            <person name="Madan Babu M."/>
            <person name="Madera M."/>
            <person name="Marchionni L."/>
            <person name="Matsuda H."/>
            <person name="Matsuzawa S."/>
            <person name="Miki H."/>
            <person name="Mignone F."/>
            <person name="Miyake S."/>
            <person name="Morris K."/>
            <person name="Mottagui-Tabar S."/>
            <person name="Mulder N."/>
            <person name="Nakano N."/>
            <person name="Nakauchi H."/>
            <person name="Ng P."/>
            <person name="Nilsson R."/>
            <person name="Nishiguchi S."/>
            <person name="Nishikawa S."/>
            <person name="Nori F."/>
            <person name="Ohara O."/>
            <person name="Okazaki Y."/>
            <person name="Orlando V."/>
            <person name="Pang K.C."/>
            <person name="Pavan W.J."/>
            <person name="Pavesi G."/>
            <person name="Pesole G."/>
            <person name="Petrovsky N."/>
            <person name="Piazza S."/>
            <person name="Reed J."/>
            <person name="Reid J.F."/>
            <person name="Ring B.Z."/>
            <person name="Ringwald M."/>
            <person name="Rost B."/>
            <person name="Ruan Y."/>
            <person name="Salzberg S.L."/>
            <person name="Sandelin A."/>
            <person name="Schneider C."/>
            <person name="Schoenbach C."/>
            <person name="Sekiguchi K."/>
            <person name="Semple C.A."/>
            <person name="Seno S."/>
            <person name="Sessa L."/>
            <person name="Sheng Y."/>
            <person name="Shibata Y."/>
            <person name="Shimada H."/>
            <person name="Shimada K."/>
            <person name="Silva D."/>
            <person name="Sinclair B."/>
            <person name="Sperling S."/>
            <person name="Stupka E."/>
            <person name="Sugiura K."/>
            <person name="Sultana R."/>
            <person name="Takenaka Y."/>
            <person name="Taki K."/>
            <person name="Tammoja K."/>
            <person name="Tan S.L."/>
            <person name="Tang S."/>
            <person name="Taylor M.S."/>
            <person name="Tegner J."/>
            <person name="Teichmann S.A."/>
            <person name="Ueda H.R."/>
            <person name="van Nimwegen E."/>
            <person name="Verardo R."/>
            <person name="Wei C.L."/>
            <person name="Yagi K."/>
            <person name="Yamanishi H."/>
            <person name="Zabarovsky E."/>
            <person name="Zhu S."/>
            <person name="Zimmer A."/>
            <person name="Hide W."/>
            <person name="Bult C."/>
            <person name="Grimmond S.M."/>
            <person name="Teasdale R.D."/>
            <person name="Liu E.T."/>
            <person name="Brusic V."/>
            <person name="Quackenbush J."/>
            <person name="Wahlestedt C."/>
            <person name="Mattick J.S."/>
            <person name="Hume D.A."/>
            <person name="Kai C."/>
            <person name="Sasaki D."/>
            <person name="Tomaru Y."/>
            <person name="Fukuda S."/>
            <person name="Kanamori-Katayama M."/>
            <person name="Suzuki M."/>
            <person name="Aoki J."/>
            <person name="Arakawa T."/>
            <person name="Iida J."/>
            <person name="Imamura K."/>
            <person name="Itoh M."/>
            <person name="Kato T."/>
            <person name="Kawaji H."/>
            <person name="Kawagashira N."/>
            <person name="Kawashima T."/>
            <person name="Kojima M."/>
            <person name="Kondo S."/>
            <person name="Konno H."/>
            <person name="Nakano K."/>
            <person name="Ninomiya N."/>
            <person name="Nishio T."/>
            <person name="Okada M."/>
            <person name="Plessy C."/>
            <person name="Shibata K."/>
            <person name="Shiraki T."/>
            <person name="Suzuki S."/>
            <person name="Tagami M."/>
            <person name="Waki K."/>
            <person name="Watahiki A."/>
            <person name="Okamura-Oho Y."/>
            <person name="Suzuki H."/>
            <person name="Kawai J."/>
            <person name="Hayashizaki Y."/>
        </authorList>
    </citation>
    <scope>NUCLEOTIDE SEQUENCE [LARGE SCALE MRNA]</scope>
    <source>
        <strain>C57BL/6J</strain>
    </source>
</reference>
<reference key="2">
    <citation type="journal article" date="2009" name="Mol. Cell. Proteomics">
        <title>Large scale localization of protein phosphorylation by use of electron capture dissociation mass spectrometry.</title>
        <authorList>
            <person name="Sweet S.M."/>
            <person name="Bailey C.M."/>
            <person name="Cunningham D.L."/>
            <person name="Heath J.K."/>
            <person name="Cooper H.J."/>
        </authorList>
    </citation>
    <scope>PHOSPHORYLATION [LARGE SCALE ANALYSIS] AT SER-641</scope>
    <scope>IDENTIFICATION BY MASS SPECTROMETRY [LARGE SCALE ANALYSIS]</scope>
    <source>
        <tissue>Embryonic fibroblast</tissue>
    </source>
</reference>
<reference key="3">
    <citation type="journal article" date="2010" name="Cell">
        <title>A tissue-specific atlas of mouse protein phosphorylation and expression.</title>
        <authorList>
            <person name="Huttlin E.L."/>
            <person name="Jedrychowski M.P."/>
            <person name="Elias J.E."/>
            <person name="Goswami T."/>
            <person name="Rad R."/>
            <person name="Beausoleil S.A."/>
            <person name="Villen J."/>
            <person name="Haas W."/>
            <person name="Sowa M.E."/>
            <person name="Gygi S.P."/>
        </authorList>
    </citation>
    <scope>PHOSPHORYLATION [LARGE SCALE ANALYSIS] AT SER-641</scope>
    <scope>IDENTIFICATION BY MASS SPECTROMETRY [LARGE SCALE ANALYSIS]</scope>
    <source>
        <tissue>Brown adipose tissue</tissue>
        <tissue>Kidney</tissue>
        <tissue>Liver</tissue>
        <tissue>Lung</tissue>
        <tissue>Spleen</tissue>
        <tissue>Testis</tissue>
    </source>
</reference>
<comment type="similarity">
    <text evidence="3">Belongs to the WD repeat GAD-1 family.</text>
</comment>
<sequence>MEHSGTSEVTGADTAGPDPQLAVTMGFTGFGKKARTFDLEAMFEQTRRTAVERSRKTLEAREKEEEMNREKELRKQIEDMEPAPSSSSAARERSQSSCRDTSSSDSESDDSSDSSDDELIGPPLPPKMVGESVTTVDEGTLGPLPPPLCEEGEDDDDDELDDEGEEDNPVQRIPDSHEITLRHGTKTVSALGLDPSGARLVTGGYDYDVKFWDFAGMDASFKAFRSLQPCECHQIKSLQYSNTGDMILVVSGSSQAKVIDRDGFEVMECIKGDQYIVDMANTKGHTAMLHTDSWHPKIKGEFMTCSNDATVRLWEVENPKKQKSVFKPRTMQGKKVIPTTCTYSRDGNLVAAACQNGSIQIWDRNLTVHPKFHYKQAHDPGTDTSCVAFSYDGNVLASRGGDDTLKLWDVRQFNKPLFSASDLPTLFPMTDCCFSPDDKLIVTGTSVQRGCGSGKLVFLERRTFQRVYEIHITDASVVRCLWHPKLNQIMVGTGNGLAKVYYDPNKSQRGAKLCVVKTQRKAKQAETLTQDYIITPHALPMFREPRQRSTRKQLEKDRLDPLKSHKPEPPVAGPGRGGRVGTHGGTLSSYIVKNIALDKTDDSNPREAILRHAKAAEDNPYWVSPAYSKTQPKTMFAQVESDDEESKNEPEWKKRKI</sequence>
<proteinExistence type="evidence at protein level"/>
<protein>
    <recommendedName>
        <fullName>WD repeat-containing protein 70</fullName>
    </recommendedName>
</protein>
<evidence type="ECO:0000250" key="1">
    <source>
        <dbReference type="UniProtKB" id="Q9NW82"/>
    </source>
</evidence>
<evidence type="ECO:0000256" key="2">
    <source>
        <dbReference type="SAM" id="MobiDB-lite"/>
    </source>
</evidence>
<evidence type="ECO:0000305" key="3"/>
<evidence type="ECO:0007744" key="4">
    <source>
    </source>
</evidence>
<evidence type="ECO:0007744" key="5">
    <source>
    </source>
</evidence>
<name>WDR70_MOUSE</name>
<gene>
    <name type="primary">Wdr70</name>
</gene>
<accession>Q3TWF6</accession>